<protein>
    <recommendedName>
        <fullName>Neutral protease 2 homolog MGG_10927</fullName>
        <ecNumber>3.4.24.39</ecNumber>
    </recommendedName>
    <alternativeName>
        <fullName>Deuterolysin MGG_10927</fullName>
    </alternativeName>
</protein>
<accession>E3QWD3</accession>
<comment type="function">
    <text evidence="1">Secreted metalloproteinase that allows assimilation of proteinaceous substrates. Shows high activities on basic nuclear substrates such as histone and protamine (By similarity).</text>
</comment>
<comment type="catalytic activity">
    <reaction>
        <text>Preferential cleavage of bonds with hydrophobic residues in P1'. Also 3-Asn-|-Gln-4 and 8-Gly-|-Ser-9 bonds in insulin B chain.</text>
        <dbReference type="EC" id="3.4.24.39"/>
    </reaction>
</comment>
<comment type="cofactor">
    <cofactor evidence="1">
        <name>Zn(2+)</name>
        <dbReference type="ChEBI" id="CHEBI:29105"/>
    </cofactor>
    <text evidence="1">Binds 1 zinc ion per subunit.</text>
</comment>
<comment type="subcellular location">
    <subcellularLocation>
        <location evidence="1">Secreted</location>
    </subcellularLocation>
</comment>
<comment type="similarity">
    <text evidence="3">Belongs to the peptidase M35 family.</text>
</comment>
<proteinExistence type="inferred from homology"/>
<evidence type="ECO:0000250" key="1"/>
<evidence type="ECO:0000255" key="2"/>
<evidence type="ECO:0000305" key="3"/>
<organism>
    <name type="scientific">Colletotrichum graminicola (strain M1.001 / M2 / FGSC 10212)</name>
    <name type="common">Maize anthracnose fungus</name>
    <name type="synonym">Glomerella graminicola</name>
    <dbReference type="NCBI Taxonomy" id="645133"/>
    <lineage>
        <taxon>Eukaryota</taxon>
        <taxon>Fungi</taxon>
        <taxon>Dikarya</taxon>
        <taxon>Ascomycota</taxon>
        <taxon>Pezizomycotina</taxon>
        <taxon>Sordariomycetes</taxon>
        <taxon>Hypocreomycetidae</taxon>
        <taxon>Glomerellales</taxon>
        <taxon>Glomerellaceae</taxon>
        <taxon>Colletotrichum</taxon>
        <taxon>Colletotrichum graminicola species complex</taxon>
    </lineage>
</organism>
<keyword id="KW-0165">Cleavage on pair of basic residues</keyword>
<keyword id="KW-1015">Disulfide bond</keyword>
<keyword id="KW-0378">Hydrolase</keyword>
<keyword id="KW-0479">Metal-binding</keyword>
<keyword id="KW-0482">Metalloprotease</keyword>
<keyword id="KW-0645">Protease</keyword>
<keyword id="KW-1185">Reference proteome</keyword>
<keyword id="KW-0964">Secreted</keyword>
<keyword id="KW-0732">Signal</keyword>
<keyword id="KW-0862">Zinc</keyword>
<keyword id="KW-0865">Zymogen</keyword>
<gene>
    <name type="ORF">GLRG_10315</name>
</gene>
<dbReference type="EC" id="3.4.24.39"/>
<dbReference type="EMBL" id="GG697389">
    <property type="protein sequence ID" value="EFQ35171.1"/>
    <property type="molecule type" value="Genomic_DNA"/>
</dbReference>
<dbReference type="RefSeq" id="XP_008099191.1">
    <property type="nucleotide sequence ID" value="XM_008101000.1"/>
</dbReference>
<dbReference type="SMR" id="E3QWD3"/>
<dbReference type="STRING" id="645133.E3QWD3"/>
<dbReference type="EnsemblFungi" id="EFQ35171">
    <property type="protein sequence ID" value="EFQ35171"/>
    <property type="gene ID" value="GLRG_10315"/>
</dbReference>
<dbReference type="GeneID" id="24415680"/>
<dbReference type="VEuPathDB" id="FungiDB:GLRG_10315"/>
<dbReference type="eggNOG" id="ENOG502SGF5">
    <property type="taxonomic scope" value="Eukaryota"/>
</dbReference>
<dbReference type="HOGENOM" id="CLU_039313_0_0_1"/>
<dbReference type="OrthoDB" id="412874at2759"/>
<dbReference type="Proteomes" id="UP000008782">
    <property type="component" value="Unassembled WGS sequence"/>
</dbReference>
<dbReference type="GO" id="GO:0005576">
    <property type="term" value="C:extracellular region"/>
    <property type="evidence" value="ECO:0007669"/>
    <property type="project" value="UniProtKB-SubCell"/>
</dbReference>
<dbReference type="GO" id="GO:0046872">
    <property type="term" value="F:metal ion binding"/>
    <property type="evidence" value="ECO:0007669"/>
    <property type="project" value="UniProtKB-KW"/>
</dbReference>
<dbReference type="GO" id="GO:0004222">
    <property type="term" value="F:metalloendopeptidase activity"/>
    <property type="evidence" value="ECO:0007669"/>
    <property type="project" value="InterPro"/>
</dbReference>
<dbReference type="GO" id="GO:0006508">
    <property type="term" value="P:proteolysis"/>
    <property type="evidence" value="ECO:0007669"/>
    <property type="project" value="UniProtKB-KW"/>
</dbReference>
<dbReference type="CDD" id="cd11008">
    <property type="entry name" value="M35_deuterolysin_like"/>
    <property type="match status" value="1"/>
</dbReference>
<dbReference type="Gene3D" id="2.60.40.2970">
    <property type="match status" value="1"/>
</dbReference>
<dbReference type="Gene3D" id="3.40.390.10">
    <property type="entry name" value="Collagenase (Catalytic Domain)"/>
    <property type="match status" value="1"/>
</dbReference>
<dbReference type="InterPro" id="IPR050414">
    <property type="entry name" value="Fungal_M35_metalloproteases"/>
</dbReference>
<dbReference type="InterPro" id="IPR029463">
    <property type="entry name" value="Lys_MEP"/>
</dbReference>
<dbReference type="InterPro" id="IPR024079">
    <property type="entry name" value="MetalloPept_cat_dom_sf"/>
</dbReference>
<dbReference type="InterPro" id="IPR001384">
    <property type="entry name" value="Peptidase_M35"/>
</dbReference>
<dbReference type="PANTHER" id="PTHR37016">
    <property type="match status" value="1"/>
</dbReference>
<dbReference type="PANTHER" id="PTHR37016:SF2">
    <property type="entry name" value="NEUTRAL PROTEASE 2 HOMOLOG SNOG_02177"/>
    <property type="match status" value="1"/>
</dbReference>
<dbReference type="Pfam" id="PF02102">
    <property type="entry name" value="Peptidase_M35"/>
    <property type="match status" value="1"/>
</dbReference>
<dbReference type="PRINTS" id="PR00768">
    <property type="entry name" value="DEUTEROLYSIN"/>
</dbReference>
<dbReference type="SMART" id="SM01351">
    <property type="entry name" value="Aspzincin_M35"/>
    <property type="match status" value="1"/>
</dbReference>
<dbReference type="SUPFAM" id="SSF55486">
    <property type="entry name" value="Metalloproteases ('zincins'), catalytic domain"/>
    <property type="match status" value="1"/>
</dbReference>
<reference key="1">
    <citation type="journal article" date="2012" name="Nat. Genet.">
        <title>Lifestyle transitions in plant pathogenic Colletotrichum fungi deciphered by genome and transcriptome analyses.</title>
        <authorList>
            <person name="O'Connell R.J."/>
            <person name="Thon M.R."/>
            <person name="Hacquard S."/>
            <person name="Amyotte S.G."/>
            <person name="Kleemann J."/>
            <person name="Torres M.F."/>
            <person name="Damm U."/>
            <person name="Buiate E.A."/>
            <person name="Epstein L."/>
            <person name="Alkan N."/>
            <person name="Altmueller J."/>
            <person name="Alvarado-Balderrama L."/>
            <person name="Bauser C.A."/>
            <person name="Becker C."/>
            <person name="Birren B.W."/>
            <person name="Chen Z."/>
            <person name="Choi J."/>
            <person name="Crouch J.A."/>
            <person name="Duvick J.P."/>
            <person name="Farman M.A."/>
            <person name="Gan P."/>
            <person name="Heiman D."/>
            <person name="Henrissat B."/>
            <person name="Howard R.J."/>
            <person name="Kabbage M."/>
            <person name="Koch C."/>
            <person name="Kracher B."/>
            <person name="Kubo Y."/>
            <person name="Law A.D."/>
            <person name="Lebrun M.-H."/>
            <person name="Lee Y.-H."/>
            <person name="Miyara I."/>
            <person name="Moore N."/>
            <person name="Neumann U."/>
            <person name="Nordstroem K."/>
            <person name="Panaccione D.G."/>
            <person name="Panstruga R."/>
            <person name="Place M."/>
            <person name="Proctor R.H."/>
            <person name="Prusky D."/>
            <person name="Rech G."/>
            <person name="Reinhardt R."/>
            <person name="Rollins J.A."/>
            <person name="Rounsley S."/>
            <person name="Schardl C.L."/>
            <person name="Schwartz D.C."/>
            <person name="Shenoy N."/>
            <person name="Shirasu K."/>
            <person name="Sikhakolli U.R."/>
            <person name="Stueber K."/>
            <person name="Sukno S.A."/>
            <person name="Sweigard J.A."/>
            <person name="Takano Y."/>
            <person name="Takahara H."/>
            <person name="Trail F."/>
            <person name="van der Does H.C."/>
            <person name="Voll L.M."/>
            <person name="Will I."/>
            <person name="Young S."/>
            <person name="Zeng Q."/>
            <person name="Zhang J."/>
            <person name="Zhou S."/>
            <person name="Dickman M.B."/>
            <person name="Schulze-Lefert P."/>
            <person name="Ver Loren van Themaat E."/>
            <person name="Ma L.-J."/>
            <person name="Vaillancourt L.J."/>
        </authorList>
    </citation>
    <scope>NUCLEOTIDE SEQUENCE [LARGE SCALE GENOMIC DNA]</scope>
    <source>
        <strain>M1.001 / M2 / FGSC 10212</strain>
    </source>
</reference>
<sequence>MKFSIGVSLLATLAGAVNVDMAKRDTSPLNVKLEALGNSGVKAVLTNTGDSDIKLFKTGTFLDKSPVEKVEVFAAGSKIDFDGVRLQISTTGLTEEAFQIVAAGETFEVEFDAAELHDLSKGGAVDIVTQGSFLYADVDSTEIAGTIPFSSNSVHTEINGDEAASVRAAFLAKRTIVQSDCTGTRRTATVNAISRCRALAAAASQAAASGPVARMTEYFKSSTTATRNSVATVFRNIVSECGSTTSGVSRQYCTDVYGACSNGVIAYTVPAQNYMVNCPYFFNNMAAASSTCHAQDQQTTILHEMTHLRQIKGTSDYGGYGYNFVRSLSAAQNLNHADTYTLFAQSIYAGC</sequence>
<name>NPIIA_COLGM</name>
<feature type="signal peptide" evidence="2">
    <location>
        <begin position="1"/>
        <end position="16"/>
    </location>
</feature>
<feature type="propeptide" id="PRO_0000407100" evidence="1">
    <location>
        <begin position="17"/>
        <end position="177"/>
    </location>
</feature>
<feature type="chain" id="PRO_0000407101" description="Neutral protease 2 homolog MGG_10927">
    <location>
        <begin position="178"/>
        <end position="351"/>
    </location>
</feature>
<feature type="active site" evidence="1">
    <location>
        <position position="304"/>
    </location>
</feature>
<feature type="binding site" evidence="1">
    <location>
        <position position="303"/>
    </location>
    <ligand>
        <name>Zn(2+)</name>
        <dbReference type="ChEBI" id="CHEBI:29105"/>
        <note>catalytic</note>
    </ligand>
</feature>
<feature type="binding site" evidence="1">
    <location>
        <position position="307"/>
    </location>
    <ligand>
        <name>Zn(2+)</name>
        <dbReference type="ChEBI" id="CHEBI:29105"/>
        <note>catalytic</note>
    </ligand>
</feature>
<feature type="disulfide bond" evidence="1">
    <location>
        <begin position="181"/>
        <end position="253"/>
    </location>
</feature>
<feature type="disulfide bond" evidence="1">
    <location>
        <begin position="260"/>
        <end position="278"/>
    </location>
</feature>